<evidence type="ECO:0000255" key="1">
    <source>
        <dbReference type="HAMAP-Rule" id="MF_00386"/>
    </source>
</evidence>
<comment type="function">
    <text evidence="1">Could be involved in insertion of integral membrane proteins into the membrane.</text>
</comment>
<comment type="subcellular location">
    <subcellularLocation>
        <location evidence="1">Cell membrane</location>
        <topology evidence="1">Peripheral membrane protein</topology>
        <orientation evidence="1">Cytoplasmic side</orientation>
    </subcellularLocation>
</comment>
<comment type="similarity">
    <text evidence="1">Belongs to the UPF0161 family.</text>
</comment>
<feature type="chain" id="PRO_1000060720" description="Putative membrane protein insertion efficiency factor">
    <location>
        <begin position="1"/>
        <end position="74"/>
    </location>
</feature>
<organism>
    <name type="scientific">Bacillus pumilus (strain SAFR-032)</name>
    <dbReference type="NCBI Taxonomy" id="315750"/>
    <lineage>
        <taxon>Bacteria</taxon>
        <taxon>Bacillati</taxon>
        <taxon>Bacillota</taxon>
        <taxon>Bacilli</taxon>
        <taxon>Bacillales</taxon>
        <taxon>Bacillaceae</taxon>
        <taxon>Bacillus</taxon>
    </lineage>
</organism>
<protein>
    <recommendedName>
        <fullName evidence="1">Putative membrane protein insertion efficiency factor</fullName>
    </recommendedName>
</protein>
<proteinExistence type="inferred from homology"/>
<name>YIDD_BACP2</name>
<sequence>MKQIFIGIIRFYQKCISPLTPPSCRFYPTCSNYGLEAIKTHGALKGGWLTIKRILKCHPLHPGGIDPVPPKKEK</sequence>
<gene>
    <name type="ordered locus">BPUM_2706</name>
</gene>
<dbReference type="EMBL" id="CP000813">
    <property type="protein sequence ID" value="ABV63364.1"/>
    <property type="molecule type" value="Genomic_DNA"/>
</dbReference>
<dbReference type="STRING" id="315750.BPUM_2706"/>
<dbReference type="GeneID" id="5621972"/>
<dbReference type="KEGG" id="bpu:BPUM_2706"/>
<dbReference type="eggNOG" id="COG0759">
    <property type="taxonomic scope" value="Bacteria"/>
</dbReference>
<dbReference type="HOGENOM" id="CLU_144811_6_0_9"/>
<dbReference type="OrthoDB" id="9801753at2"/>
<dbReference type="Proteomes" id="UP000001355">
    <property type="component" value="Chromosome"/>
</dbReference>
<dbReference type="GO" id="GO:0005886">
    <property type="term" value="C:plasma membrane"/>
    <property type="evidence" value="ECO:0007669"/>
    <property type="project" value="UniProtKB-SubCell"/>
</dbReference>
<dbReference type="HAMAP" id="MF_00386">
    <property type="entry name" value="UPF0161_YidD"/>
    <property type="match status" value="1"/>
</dbReference>
<dbReference type="InterPro" id="IPR002696">
    <property type="entry name" value="Membr_insert_effic_factor_YidD"/>
</dbReference>
<dbReference type="NCBIfam" id="TIGR00278">
    <property type="entry name" value="membrane protein insertion efficiency factor YidD"/>
    <property type="match status" value="1"/>
</dbReference>
<dbReference type="PANTHER" id="PTHR33383">
    <property type="entry name" value="MEMBRANE PROTEIN INSERTION EFFICIENCY FACTOR-RELATED"/>
    <property type="match status" value="1"/>
</dbReference>
<dbReference type="PANTHER" id="PTHR33383:SF1">
    <property type="entry name" value="MEMBRANE PROTEIN INSERTION EFFICIENCY FACTOR-RELATED"/>
    <property type="match status" value="1"/>
</dbReference>
<dbReference type="Pfam" id="PF01809">
    <property type="entry name" value="YidD"/>
    <property type="match status" value="1"/>
</dbReference>
<dbReference type="SMART" id="SM01234">
    <property type="entry name" value="Haemolytic"/>
    <property type="match status" value="1"/>
</dbReference>
<accession>A8FGJ7</accession>
<reference key="1">
    <citation type="journal article" date="2007" name="PLoS ONE">
        <title>Paradoxical DNA repair and peroxide resistance gene conservation in Bacillus pumilus SAFR-032.</title>
        <authorList>
            <person name="Gioia J."/>
            <person name="Yerrapragada S."/>
            <person name="Qin X."/>
            <person name="Jiang H."/>
            <person name="Igboeli O.C."/>
            <person name="Muzny D."/>
            <person name="Dugan-Rocha S."/>
            <person name="Ding Y."/>
            <person name="Hawes A."/>
            <person name="Liu W."/>
            <person name="Perez L."/>
            <person name="Kovar C."/>
            <person name="Dinh H."/>
            <person name="Lee S."/>
            <person name="Nazareth L."/>
            <person name="Blyth P."/>
            <person name="Holder M."/>
            <person name="Buhay C."/>
            <person name="Tirumalai M.R."/>
            <person name="Liu Y."/>
            <person name="Dasgupta I."/>
            <person name="Bokhetache L."/>
            <person name="Fujita M."/>
            <person name="Karouia F."/>
            <person name="Eswara Moorthy P."/>
            <person name="Siefert J."/>
            <person name="Uzman A."/>
            <person name="Buzumbo P."/>
            <person name="Verma A."/>
            <person name="Zwiya H."/>
            <person name="McWilliams B.D."/>
            <person name="Olowu A."/>
            <person name="Clinkenbeard K.D."/>
            <person name="Newcombe D."/>
            <person name="Golebiewski L."/>
            <person name="Petrosino J.F."/>
            <person name="Nicholson W.L."/>
            <person name="Fox G.E."/>
            <person name="Venkateswaran K."/>
            <person name="Highlander S.K."/>
            <person name="Weinstock G.M."/>
        </authorList>
    </citation>
    <scope>NUCLEOTIDE SEQUENCE [LARGE SCALE GENOMIC DNA]</scope>
    <source>
        <strain>SAFR-032</strain>
    </source>
</reference>
<keyword id="KW-1003">Cell membrane</keyword>
<keyword id="KW-0472">Membrane</keyword>